<accession>Q8NWC8</accession>
<sequence length="174" mass="20206">MNHDKSPIILIGFMGTGKSTIGKYVADEQNLSFIDIDSYIEEKYKLTIPEIFSKHGEQYFRNLEFTCLQECINTADIIATGGGIIESEEAFNFLKNQKNIIWLDCNIDIIYSRINDDPHRPNANNKTIKQLNDLYCSRNLRYNEIAFKKFDSHLLSISEIYYELLNLIKASDQY</sequence>
<dbReference type="EC" id="2.7.1.71" evidence="1"/>
<dbReference type="EMBL" id="BA000033">
    <property type="protein sequence ID" value="BAB95355.1"/>
    <property type="molecule type" value="Genomic_DNA"/>
</dbReference>
<dbReference type="RefSeq" id="WP_001015121.1">
    <property type="nucleotide sequence ID" value="NC_003923.1"/>
</dbReference>
<dbReference type="SMR" id="Q8NWC8"/>
<dbReference type="KEGG" id="sam:MW1490"/>
<dbReference type="HOGENOM" id="CLU_057607_4_3_9"/>
<dbReference type="UniPathway" id="UPA00053">
    <property type="reaction ID" value="UER00088"/>
</dbReference>
<dbReference type="GO" id="GO:0005829">
    <property type="term" value="C:cytosol"/>
    <property type="evidence" value="ECO:0007669"/>
    <property type="project" value="TreeGrafter"/>
</dbReference>
<dbReference type="GO" id="GO:0005524">
    <property type="term" value="F:ATP binding"/>
    <property type="evidence" value="ECO:0007669"/>
    <property type="project" value="UniProtKB-UniRule"/>
</dbReference>
<dbReference type="GO" id="GO:0000287">
    <property type="term" value="F:magnesium ion binding"/>
    <property type="evidence" value="ECO:0007669"/>
    <property type="project" value="UniProtKB-UniRule"/>
</dbReference>
<dbReference type="GO" id="GO:0004765">
    <property type="term" value="F:shikimate kinase activity"/>
    <property type="evidence" value="ECO:0007669"/>
    <property type="project" value="UniProtKB-UniRule"/>
</dbReference>
<dbReference type="GO" id="GO:0008652">
    <property type="term" value="P:amino acid biosynthetic process"/>
    <property type="evidence" value="ECO:0007669"/>
    <property type="project" value="UniProtKB-KW"/>
</dbReference>
<dbReference type="GO" id="GO:0009073">
    <property type="term" value="P:aromatic amino acid family biosynthetic process"/>
    <property type="evidence" value="ECO:0007669"/>
    <property type="project" value="UniProtKB-KW"/>
</dbReference>
<dbReference type="GO" id="GO:0009423">
    <property type="term" value="P:chorismate biosynthetic process"/>
    <property type="evidence" value="ECO:0007669"/>
    <property type="project" value="UniProtKB-UniRule"/>
</dbReference>
<dbReference type="CDD" id="cd00464">
    <property type="entry name" value="SK"/>
    <property type="match status" value="1"/>
</dbReference>
<dbReference type="FunFam" id="3.40.50.300:FF:001734">
    <property type="entry name" value="Shikimate kinase"/>
    <property type="match status" value="1"/>
</dbReference>
<dbReference type="Gene3D" id="3.40.50.300">
    <property type="entry name" value="P-loop containing nucleotide triphosphate hydrolases"/>
    <property type="match status" value="1"/>
</dbReference>
<dbReference type="HAMAP" id="MF_00109">
    <property type="entry name" value="Shikimate_kinase"/>
    <property type="match status" value="1"/>
</dbReference>
<dbReference type="InterPro" id="IPR027417">
    <property type="entry name" value="P-loop_NTPase"/>
</dbReference>
<dbReference type="InterPro" id="IPR031322">
    <property type="entry name" value="Shikimate/glucono_kinase"/>
</dbReference>
<dbReference type="InterPro" id="IPR000623">
    <property type="entry name" value="Shikimate_kinase/TSH1"/>
</dbReference>
<dbReference type="InterPro" id="IPR023000">
    <property type="entry name" value="Shikimate_kinase_CS"/>
</dbReference>
<dbReference type="PANTHER" id="PTHR21087">
    <property type="entry name" value="SHIKIMATE KINASE"/>
    <property type="match status" value="1"/>
</dbReference>
<dbReference type="PANTHER" id="PTHR21087:SF16">
    <property type="entry name" value="SHIKIMATE KINASE 1, CHLOROPLASTIC"/>
    <property type="match status" value="1"/>
</dbReference>
<dbReference type="Pfam" id="PF01202">
    <property type="entry name" value="SKI"/>
    <property type="match status" value="1"/>
</dbReference>
<dbReference type="PRINTS" id="PR01100">
    <property type="entry name" value="SHIKIMTKNASE"/>
</dbReference>
<dbReference type="SUPFAM" id="SSF52540">
    <property type="entry name" value="P-loop containing nucleoside triphosphate hydrolases"/>
    <property type="match status" value="1"/>
</dbReference>
<dbReference type="PROSITE" id="PS01128">
    <property type="entry name" value="SHIKIMATE_KINASE"/>
    <property type="match status" value="1"/>
</dbReference>
<protein>
    <recommendedName>
        <fullName evidence="1">Shikimate kinase</fullName>
        <shortName evidence="1">SK</shortName>
        <ecNumber evidence="1">2.7.1.71</ecNumber>
    </recommendedName>
</protein>
<feature type="chain" id="PRO_0000192415" description="Shikimate kinase">
    <location>
        <begin position="1"/>
        <end position="174"/>
    </location>
</feature>
<feature type="binding site" evidence="1">
    <location>
        <begin position="15"/>
        <end position="20"/>
    </location>
    <ligand>
        <name>ATP</name>
        <dbReference type="ChEBI" id="CHEBI:30616"/>
    </ligand>
</feature>
<feature type="binding site" evidence="1">
    <location>
        <position position="19"/>
    </location>
    <ligand>
        <name>Mg(2+)</name>
        <dbReference type="ChEBI" id="CHEBI:18420"/>
    </ligand>
</feature>
<feature type="binding site" evidence="1">
    <location>
        <position position="37"/>
    </location>
    <ligand>
        <name>substrate</name>
    </ligand>
</feature>
<feature type="binding site" evidence="1">
    <location>
        <position position="61"/>
    </location>
    <ligand>
        <name>substrate</name>
    </ligand>
</feature>
<feature type="binding site" evidence="1">
    <location>
        <position position="82"/>
    </location>
    <ligand>
        <name>substrate</name>
    </ligand>
</feature>
<feature type="binding site" evidence="1">
    <location>
        <position position="120"/>
    </location>
    <ligand>
        <name>ATP</name>
        <dbReference type="ChEBI" id="CHEBI:30616"/>
    </ligand>
</feature>
<feature type="binding site" evidence="1">
    <location>
        <position position="138"/>
    </location>
    <ligand>
        <name>substrate</name>
    </ligand>
</feature>
<name>AROK_STAAW</name>
<reference key="1">
    <citation type="journal article" date="2002" name="Lancet">
        <title>Genome and virulence determinants of high virulence community-acquired MRSA.</title>
        <authorList>
            <person name="Baba T."/>
            <person name="Takeuchi F."/>
            <person name="Kuroda M."/>
            <person name="Yuzawa H."/>
            <person name="Aoki K."/>
            <person name="Oguchi A."/>
            <person name="Nagai Y."/>
            <person name="Iwama N."/>
            <person name="Asano K."/>
            <person name="Naimi T."/>
            <person name="Kuroda H."/>
            <person name="Cui L."/>
            <person name="Yamamoto K."/>
            <person name="Hiramatsu K."/>
        </authorList>
    </citation>
    <scope>NUCLEOTIDE SEQUENCE [LARGE SCALE GENOMIC DNA]</scope>
    <source>
        <strain>MW2</strain>
    </source>
</reference>
<evidence type="ECO:0000255" key="1">
    <source>
        <dbReference type="HAMAP-Rule" id="MF_00109"/>
    </source>
</evidence>
<organism>
    <name type="scientific">Staphylococcus aureus (strain MW2)</name>
    <dbReference type="NCBI Taxonomy" id="196620"/>
    <lineage>
        <taxon>Bacteria</taxon>
        <taxon>Bacillati</taxon>
        <taxon>Bacillota</taxon>
        <taxon>Bacilli</taxon>
        <taxon>Bacillales</taxon>
        <taxon>Staphylococcaceae</taxon>
        <taxon>Staphylococcus</taxon>
    </lineage>
</organism>
<keyword id="KW-0028">Amino-acid biosynthesis</keyword>
<keyword id="KW-0057">Aromatic amino acid biosynthesis</keyword>
<keyword id="KW-0067">ATP-binding</keyword>
<keyword id="KW-0963">Cytoplasm</keyword>
<keyword id="KW-0418">Kinase</keyword>
<keyword id="KW-0460">Magnesium</keyword>
<keyword id="KW-0479">Metal-binding</keyword>
<keyword id="KW-0547">Nucleotide-binding</keyword>
<keyword id="KW-0808">Transferase</keyword>
<gene>
    <name evidence="1" type="primary">aroK</name>
    <name type="ordered locus">MW1490</name>
</gene>
<comment type="function">
    <text evidence="1">Catalyzes the specific phosphorylation of the 3-hydroxyl group of shikimic acid using ATP as a cosubstrate.</text>
</comment>
<comment type="catalytic activity">
    <reaction evidence="1">
        <text>shikimate + ATP = 3-phosphoshikimate + ADP + H(+)</text>
        <dbReference type="Rhea" id="RHEA:13121"/>
        <dbReference type="ChEBI" id="CHEBI:15378"/>
        <dbReference type="ChEBI" id="CHEBI:30616"/>
        <dbReference type="ChEBI" id="CHEBI:36208"/>
        <dbReference type="ChEBI" id="CHEBI:145989"/>
        <dbReference type="ChEBI" id="CHEBI:456216"/>
        <dbReference type="EC" id="2.7.1.71"/>
    </reaction>
</comment>
<comment type="cofactor">
    <cofactor evidence="1">
        <name>Mg(2+)</name>
        <dbReference type="ChEBI" id="CHEBI:18420"/>
    </cofactor>
    <text evidence="1">Binds 1 Mg(2+) ion per subunit.</text>
</comment>
<comment type="pathway">
    <text evidence="1">Metabolic intermediate biosynthesis; chorismate biosynthesis; chorismate from D-erythrose 4-phosphate and phosphoenolpyruvate: step 5/7.</text>
</comment>
<comment type="subunit">
    <text evidence="1">Monomer.</text>
</comment>
<comment type="subcellular location">
    <subcellularLocation>
        <location evidence="1">Cytoplasm</location>
    </subcellularLocation>
</comment>
<comment type="similarity">
    <text evidence="1">Belongs to the shikimate kinase family.</text>
</comment>
<proteinExistence type="inferred from homology"/>